<proteinExistence type="inferred from homology"/>
<organism>
    <name type="scientific">Escherichia coli (strain K12 / MC4100 / BW2952)</name>
    <dbReference type="NCBI Taxonomy" id="595496"/>
    <lineage>
        <taxon>Bacteria</taxon>
        <taxon>Pseudomonadati</taxon>
        <taxon>Pseudomonadota</taxon>
        <taxon>Gammaproteobacteria</taxon>
        <taxon>Enterobacterales</taxon>
        <taxon>Enterobacteriaceae</taxon>
        <taxon>Escherichia</taxon>
    </lineage>
</organism>
<reference key="1">
    <citation type="journal article" date="2009" name="J. Bacteriol.">
        <title>Genomic sequencing reveals regulatory mutations and recombinational events in the widely used MC4100 lineage of Escherichia coli K-12.</title>
        <authorList>
            <person name="Ferenci T."/>
            <person name="Zhou Z."/>
            <person name="Betteridge T."/>
            <person name="Ren Y."/>
            <person name="Liu Y."/>
            <person name="Feng L."/>
            <person name="Reeves P.R."/>
            <person name="Wang L."/>
        </authorList>
    </citation>
    <scope>NUCLEOTIDE SEQUENCE [LARGE SCALE GENOMIC DNA]</scope>
    <source>
        <strain>K12 / MC4100 / BW2952</strain>
    </source>
</reference>
<protein>
    <recommendedName>
        <fullName evidence="1">Protein RnfH</fullName>
    </recommendedName>
</protein>
<comment type="similarity">
    <text evidence="1">Belongs to the UPF0125 (RnfH) family.</text>
</comment>
<accession>C4ZYN5</accession>
<dbReference type="EMBL" id="CP001396">
    <property type="protein sequence ID" value="ACR64902.1"/>
    <property type="molecule type" value="Genomic_DNA"/>
</dbReference>
<dbReference type="RefSeq" id="WP_001117838.1">
    <property type="nucleotide sequence ID" value="NC_012759.1"/>
</dbReference>
<dbReference type="SMR" id="C4ZYN5"/>
<dbReference type="KEGG" id="ebw:BWG_2376"/>
<dbReference type="HOGENOM" id="CLU_150721_1_0_6"/>
<dbReference type="Gene3D" id="3.10.20.280">
    <property type="entry name" value="RnfH-like"/>
    <property type="match status" value="1"/>
</dbReference>
<dbReference type="HAMAP" id="MF_00460">
    <property type="entry name" value="UPF0125_RnfH"/>
    <property type="match status" value="1"/>
</dbReference>
<dbReference type="InterPro" id="IPR016155">
    <property type="entry name" value="Mopterin_synth/thiamin_S_b"/>
</dbReference>
<dbReference type="InterPro" id="IPR005346">
    <property type="entry name" value="RnfH"/>
</dbReference>
<dbReference type="InterPro" id="IPR037021">
    <property type="entry name" value="RnfH_sf"/>
</dbReference>
<dbReference type="NCBIfam" id="NF002490">
    <property type="entry name" value="PRK01777.1"/>
    <property type="match status" value="1"/>
</dbReference>
<dbReference type="PANTHER" id="PTHR37483">
    <property type="entry name" value="UPF0125 PROTEIN RATB"/>
    <property type="match status" value="1"/>
</dbReference>
<dbReference type="PANTHER" id="PTHR37483:SF1">
    <property type="entry name" value="UPF0125 PROTEIN RATB"/>
    <property type="match status" value="1"/>
</dbReference>
<dbReference type="Pfam" id="PF03658">
    <property type="entry name" value="Ub-RnfH"/>
    <property type="match status" value="1"/>
</dbReference>
<dbReference type="SUPFAM" id="SSF54285">
    <property type="entry name" value="MoaD/ThiS"/>
    <property type="match status" value="1"/>
</dbReference>
<feature type="chain" id="PRO_1000206288" description="Protein RnfH">
    <location>
        <begin position="1"/>
        <end position="96"/>
    </location>
</feature>
<sequence length="96" mass="10789">MPGKIAVEVAYALPEKQYLQRVTLQEGATVEEAIRASGLLELRTDIDLTKNKVGIYSRPAKLSDSVHDGDRVEIYRPLIADPKELRRQRAEKSANK</sequence>
<gene>
    <name evidence="1" type="primary">rnfH</name>
    <name type="ordered locus">BWG_2376</name>
</gene>
<name>RNFH_ECOBW</name>
<evidence type="ECO:0000255" key="1">
    <source>
        <dbReference type="HAMAP-Rule" id="MF_00460"/>
    </source>
</evidence>